<sequence>MRSPSAAWLLGAAILLAASLSCSGTIQGTNRSSKGRSLIGKVDGTSHVTGKGVTVETVFSVDEFSASVLTGKLTTVFLPIVYTIVFVVGLPSNGMALWVFLFRTKKKHPAVIYMANLALADLLSVIWFPLKIAYHIHGNNWIYGEALCNVLIGFFYGNMYCSILFMTCLSVQRYWVIVNPMGHSRKKANIAIGISLAIWLLILLVTIPLYVVKQTIFIPALNITTCHDVLPEQLLVGDMFNYFLSLAIGVFLFPAFLTASAYVLMIRMLRSSAMDENSEKKRKRAIKLIVTVLAMYLICFTPSNLLLVVHYFLIKSQGQSHVYALYIVALCLSTLNSCIDPFVYYFVSHDFRDHAKNALLCRSVRTVKQMQVSLTSKKHSRKSSSYSSSSTTVKTSY</sequence>
<evidence type="ECO:0000250" key="1"/>
<evidence type="ECO:0000250" key="2">
    <source>
        <dbReference type="UniProtKB" id="P55086"/>
    </source>
</evidence>
<evidence type="ECO:0000255" key="3"/>
<evidence type="ECO:0000255" key="4">
    <source>
        <dbReference type="PROSITE-ProRule" id="PRU00521"/>
    </source>
</evidence>
<evidence type="ECO:0000256" key="5">
    <source>
        <dbReference type="SAM" id="MobiDB-lite"/>
    </source>
</evidence>
<evidence type="ECO:0000269" key="6">
    <source>
    </source>
</evidence>
<evidence type="ECO:0000269" key="7">
    <source>
    </source>
</evidence>
<evidence type="ECO:0000269" key="8">
    <source>
    </source>
</evidence>
<evidence type="ECO:0000269" key="9">
    <source>
    </source>
</evidence>
<evidence type="ECO:0000269" key="10">
    <source>
    </source>
</evidence>
<evidence type="ECO:0000269" key="11">
    <source>
    </source>
</evidence>
<evidence type="ECO:0000269" key="12">
    <source>
    </source>
</evidence>
<evidence type="ECO:0000269" key="13">
    <source>
    </source>
</evidence>
<evidence type="ECO:0000269" key="14">
    <source>
    </source>
</evidence>
<evidence type="ECO:0000269" key="15">
    <source>
    </source>
</evidence>
<evidence type="ECO:0000269" key="16">
    <source>
    </source>
</evidence>
<evidence type="ECO:0000269" key="17">
    <source>
    </source>
</evidence>
<evidence type="ECO:0000269" key="18">
    <source>
    </source>
</evidence>
<evidence type="ECO:0000269" key="19">
    <source>
    </source>
</evidence>
<evidence type="ECO:0000269" key="20">
    <source>
    </source>
</evidence>
<evidence type="ECO:0000269" key="21">
    <source>
    </source>
</evidence>
<evidence type="ECO:0000269" key="22">
    <source>
    </source>
</evidence>
<evidence type="ECO:0000269" key="23">
    <source>
    </source>
</evidence>
<evidence type="ECO:0000269" key="24">
    <source>
    </source>
</evidence>
<evidence type="ECO:0000269" key="25">
    <source>
    </source>
</evidence>
<evidence type="ECO:0000269" key="26">
    <source>
    </source>
</evidence>
<evidence type="ECO:0000269" key="27">
    <source>
    </source>
</evidence>
<evidence type="ECO:0000269" key="28">
    <source>
    </source>
</evidence>
<evidence type="ECO:0000269" key="29">
    <source>
    </source>
</evidence>
<evidence type="ECO:0000269" key="30">
    <source>
    </source>
</evidence>
<evidence type="ECO:0000269" key="31">
    <source>
    </source>
</evidence>
<evidence type="ECO:0000269" key="32">
    <source>
    </source>
</evidence>
<evidence type="ECO:0000269" key="33">
    <source>
    </source>
</evidence>
<evidence type="ECO:0000269" key="34">
    <source>
    </source>
</evidence>
<evidence type="ECO:0000269" key="35">
    <source>
    </source>
</evidence>
<evidence type="ECO:0000269" key="36">
    <source>
    </source>
</evidence>
<evidence type="ECO:0000269" key="37">
    <source>
    </source>
</evidence>
<evidence type="ECO:0000269" key="38">
    <source>
    </source>
</evidence>
<evidence type="ECO:0000269" key="39">
    <source>
    </source>
</evidence>
<evidence type="ECO:0000269" key="40">
    <source>
    </source>
</evidence>
<evidence type="ECO:0000269" key="41">
    <source>
    </source>
</evidence>
<evidence type="ECO:0000269" key="42">
    <source>
    </source>
</evidence>
<evidence type="ECO:0000269" key="43">
    <source>
    </source>
</evidence>
<evidence type="ECO:0000269" key="44">
    <source ref="4"/>
</evidence>
<evidence type="ECO:0000305" key="45"/>
<evidence type="ECO:0007744" key="46">
    <source>
        <dbReference type="PDB" id="5NDD"/>
    </source>
</evidence>
<evidence type="ECO:0007744" key="47">
    <source>
        <dbReference type="PDB" id="5NDZ"/>
    </source>
</evidence>
<evidence type="ECO:0007744" key="48">
    <source>
        <dbReference type="PDB" id="5NJ6"/>
    </source>
</evidence>
<evidence type="ECO:0007829" key="49">
    <source>
        <dbReference type="PDB" id="5NDD"/>
    </source>
</evidence>
<reference key="1">
    <citation type="journal article" date="1995" name="Eur. J. Biochem.">
        <title>Molecular cloning and functional expression of the gene encoding the human proteinase-activated receptor 2.</title>
        <authorList>
            <person name="Nystedt S."/>
            <person name="Emilsson K."/>
            <person name="Larsson A.-K."/>
            <person name="Stroembeck B."/>
            <person name="Sundelin J."/>
        </authorList>
    </citation>
    <scope>NUCLEOTIDE SEQUENCE [GENOMIC DNA]</scope>
    <scope>TISSUE SPECIFICITY</scope>
</reference>
<reference key="2">
    <citation type="journal article" date="1996" name="Biochem. J.">
        <title>Molecular cloning, expression and potential functions of the human proteinase-activated receptor-2.</title>
        <authorList>
            <person name="Boehm S.K."/>
            <person name="Kong W."/>
            <person name="Broemme D."/>
            <person name="Smeekens S.P."/>
            <person name="Anderson D.C."/>
            <person name="Connolly A.J."/>
            <person name="Kahn M.L."/>
            <person name="Nelken N.A."/>
            <person name="Coughlin S.R."/>
            <person name="Payan D.G."/>
            <person name="Bunnett N.W."/>
        </authorList>
    </citation>
    <scope>NUCLEOTIDE SEQUENCE [MRNA]</scope>
    <scope>TISSUE SPECIFICITY</scope>
    <source>
        <tissue>Kidney</tissue>
    </source>
</reference>
<reference key="3">
    <citation type="journal article" date="2006" name="J. Biol. Chem.">
        <title>Jab1, a novel protease-activated receptor-2 (PAR-2)-interacting protein, is involved in PAR-2-induced activation of activator protein-1.</title>
        <authorList>
            <person name="Luo W."/>
            <person name="Wang Y."/>
            <person name="Hanck T."/>
            <person name="Stricker R."/>
            <person name="Reiser G."/>
        </authorList>
    </citation>
    <scope>NUCLEOTIDE SEQUENCE [MRNA]</scope>
    <scope>FUNCTION</scope>
    <scope>INTERACTION WITH COPS5</scope>
</reference>
<reference key="4">
    <citation type="submission" date="2001-07" db="EMBL/GenBank/DDBJ databases">
        <authorList>
            <consortium name="SeattleSNPs variation discovery resource"/>
        </authorList>
    </citation>
    <scope>NUCLEOTIDE SEQUENCE [GENOMIC DNA]</scope>
    <scope>VARIANTS PHE-21; GLN-270 AND ALA-291</scope>
</reference>
<reference key="5">
    <citation type="submission" date="2003-08" db="EMBL/GenBank/DDBJ databases">
        <title>Cloning of human full-length CDSs in BD Creator(TM) system donor vector.</title>
        <authorList>
            <person name="Kalnine N."/>
            <person name="Chen X."/>
            <person name="Rolfs A."/>
            <person name="Halleck A."/>
            <person name="Hines L."/>
            <person name="Eisenstein S."/>
            <person name="Koundinya M."/>
            <person name="Raphael J."/>
            <person name="Moreira D."/>
            <person name="Kelley T."/>
            <person name="LaBaer J."/>
            <person name="Lin Y."/>
            <person name="Phelan M."/>
            <person name="Farmer A."/>
        </authorList>
    </citation>
    <scope>NUCLEOTIDE SEQUENCE [LARGE SCALE MRNA]</scope>
</reference>
<reference key="6">
    <citation type="submission" date="2005-07" db="EMBL/GenBank/DDBJ databases">
        <authorList>
            <person name="Mural R.J."/>
            <person name="Istrail S."/>
            <person name="Sutton G."/>
            <person name="Florea L."/>
            <person name="Halpern A.L."/>
            <person name="Mobarry C.M."/>
            <person name="Lippert R."/>
            <person name="Walenz B."/>
            <person name="Shatkay H."/>
            <person name="Dew I."/>
            <person name="Miller J.R."/>
            <person name="Flanigan M.J."/>
            <person name="Edwards N.J."/>
            <person name="Bolanos R."/>
            <person name="Fasulo D."/>
            <person name="Halldorsson B.V."/>
            <person name="Hannenhalli S."/>
            <person name="Turner R."/>
            <person name="Yooseph S."/>
            <person name="Lu F."/>
            <person name="Nusskern D.R."/>
            <person name="Shue B.C."/>
            <person name="Zheng X.H."/>
            <person name="Zhong F."/>
            <person name="Delcher A.L."/>
            <person name="Huson D.H."/>
            <person name="Kravitz S.A."/>
            <person name="Mouchard L."/>
            <person name="Reinert K."/>
            <person name="Remington K.A."/>
            <person name="Clark A.G."/>
            <person name="Waterman M.S."/>
            <person name="Eichler E.E."/>
            <person name="Adams M.D."/>
            <person name="Hunkapiller M.W."/>
            <person name="Myers E.W."/>
            <person name="Venter J.C."/>
        </authorList>
    </citation>
    <scope>NUCLEOTIDE SEQUENCE [LARGE SCALE GENOMIC DNA]</scope>
</reference>
<reference key="7">
    <citation type="journal article" date="2004" name="Genome Res.">
        <title>The status, quality, and expansion of the NIH full-length cDNA project: the Mammalian Gene Collection (MGC).</title>
        <authorList>
            <consortium name="The MGC Project Team"/>
        </authorList>
    </citation>
    <scope>NUCLEOTIDE SEQUENCE [LARGE SCALE MRNA]</scope>
    <source>
        <tissue>Ovary</tissue>
        <tissue>Pancreas</tissue>
    </source>
</reference>
<reference key="8">
    <citation type="journal article" date="1996" name="Mol. Med.">
        <title>Conserved structure and adjacent location of the thrombin receptor and protease-activated receptor 2 genes define a protease-activated receptor gene cluster.</title>
        <authorList>
            <person name="Kahn M.L."/>
            <person name="Ishii K."/>
            <person name="Kuo W.L."/>
            <person name="Piper M."/>
            <person name="Connolly A.J."/>
            <person name="Shi Y.P."/>
            <person name="Wu R."/>
            <person name="Lin C.C."/>
            <person name="Coughlin S.R."/>
        </authorList>
    </citation>
    <scope>NUCLEOTIDE SEQUENCE [GENOMIC DNA] OF 29-397</scope>
</reference>
<reference key="9">
    <citation type="journal article" date="1997" name="J. Biol. Chem.">
        <title>Interactions of mast cell tryptase with thrombin receptors and PAR-2.</title>
        <authorList>
            <person name="Molino M."/>
            <person name="Barnathan E.S."/>
            <person name="Numerof R."/>
            <person name="Clark J."/>
            <person name="Dreyer M."/>
            <person name="Cumashi A."/>
            <person name="Hoxie J.A."/>
            <person name="Schechter N."/>
            <person name="Woolkalis M."/>
            <person name="Brass L.F."/>
        </authorList>
    </citation>
    <scope>ACTIVATION BY MAST CELL TRYPTASE</scope>
</reference>
<reference key="10">
    <citation type="journal article" date="1999" name="Nature">
        <title>A protective role for protease-activated receptors in the airways.</title>
        <authorList>
            <person name="Cocks T.M."/>
            <person name="Fong B."/>
            <person name="Chow J.M."/>
            <person name="Anderson G.P."/>
            <person name="Frauman A.G."/>
            <person name="Goldie R.G."/>
            <person name="Henry P.J."/>
            <person name="Carr M.J."/>
            <person name="Hamilton J.R."/>
            <person name="Moffatt J.D."/>
        </authorList>
    </citation>
    <scope>FUNCTION IN EPITHELIAL BARRIER PROTECTION</scope>
</reference>
<reference key="11">
    <citation type="journal article" date="2000" name="J. Biol. Chem.">
        <title>Thrombin responses in human endothelial cells. Contributions from receptors other than PAR1 include the transactivation of PAR2 by thrombin-cleaved PAR1.</title>
        <authorList>
            <person name="O'Brien P.J."/>
            <person name="Prevost N."/>
            <person name="Molino M."/>
            <person name="Hollinger M.K."/>
            <person name="Woolkalis M.J."/>
            <person name="Woulfe D.S."/>
            <person name="Brass L.F."/>
        </authorList>
    </citation>
    <scope>TRANSACTIVATION BY F2R</scope>
</reference>
<reference key="12">
    <citation type="journal article" date="2000" name="J. Cell Biol.">
        <title>beta-arrestin-dependent endocytosis of proteinase-activated receptor 2 is required for intracellular targeting of activated ERK1/2.</title>
        <authorList>
            <person name="DeFea K.A."/>
            <person name="Zalevsky J."/>
            <person name="Thoma M.S."/>
            <person name="Dery O."/>
            <person name="Mullins R.D."/>
            <person name="Bunnett N.W."/>
        </authorList>
    </citation>
    <scope>FUNCTION</scope>
    <scope>MUTAGENESIS OF SER-363 AND THR-366</scope>
</reference>
<reference key="13">
    <citation type="journal article" date="2000" name="J. Biol. Chem.">
        <title>Cellular localization of membrane-type serine protease 1 and identification of protease-activated receptor-2 and single-chain urokinase-type plasminogen activator as substrates.</title>
        <authorList>
            <person name="Takeuchi T."/>
            <person name="Harris J.L."/>
            <person name="Huang W."/>
            <person name="Yan K.W."/>
            <person name="Coughlin S.R."/>
            <person name="Craik C.S."/>
        </authorList>
    </citation>
    <scope>ACTIVATION BY ST14</scope>
</reference>
<reference key="14">
    <citation type="journal article" date="2000" name="Proc. Natl. Acad. Sci. U.S.A.">
        <title>Tissue factor- and factor X-dependent activation of protease-activated receptor 2 by factor VIIa.</title>
        <authorList>
            <person name="Camerer E."/>
            <person name="Huang W."/>
            <person name="Coughlin S.R."/>
        </authorList>
    </citation>
    <scope>ACTIVATION BY COAGULATION FACTORS VII AND XA</scope>
</reference>
<reference key="15">
    <citation type="journal article" date="2001" name="Infect. Immun.">
        <title>Arginine-specific protease from Porphyromonas gingivalis activates protease-activated receptors on human oral epithelial cells and induces interleukin-6 secretion.</title>
        <authorList>
            <person name="Lourbakos A."/>
            <person name="Potempa J."/>
            <person name="Travis J."/>
            <person name="D'Andrea M.R."/>
            <person name="Andrade-Gordon P."/>
            <person name="Santulli R."/>
            <person name="Mackie E.J."/>
            <person name="Pike R.N."/>
        </authorList>
    </citation>
    <scope>FUNCTION</scope>
    <scope>ACTIVATION BY GINGIPAINS</scope>
</reference>
<reference key="16">
    <citation type="journal article" date="2001" name="J. Biol. Chem.">
        <title>Proteinase-activated receptor-2-mediated activation of stress-activated protein kinases and inhibitory kappa B kinases in NCTC 2544 keratinocytes.</title>
        <authorList>
            <person name="Kanke T."/>
            <person name="Macfarlane S.R."/>
            <person name="Seatter M.J."/>
            <person name="Davenport E."/>
            <person name="Paul A."/>
            <person name="McKenzie R.C."/>
            <person name="Plevin R."/>
        </authorList>
    </citation>
    <scope>FUNCTION IN JNK AND NF-KAPPA-B PATHWAYS</scope>
</reference>
<reference key="17">
    <citation type="journal article" date="2001" name="J. Immunol.">
        <title>Interaction of mite allergens Der p3 and Der p9 with protease-activated receptor-2 expressed by lung epithelial cells.</title>
        <authorList>
            <person name="Sun G."/>
            <person name="Stacey M.A."/>
            <person name="Schmidt M."/>
            <person name="Mori L."/>
            <person name="Mattoli S."/>
        </authorList>
    </citation>
    <scope>FUNCTION</scope>
    <scope>ACTIVATION BY DUST MITE ALLERGENS</scope>
</reference>
<reference key="18">
    <citation type="journal article" date="2001" name="J. Immunol.">
        <title>Trypsin induces activation and inflammatory mediator release from human eosinophils through protease-activated receptor-2.</title>
        <authorList>
            <person name="Miike S."/>
            <person name="McWilliam A.S."/>
            <person name="Kita H."/>
        </authorList>
    </citation>
    <scope>FUNCTION IN INFLAMMATORY RESPONSE</scope>
</reference>
<reference key="19">
    <citation type="journal article" date="2002" name="Biochem. J.">
        <title>Glycosylation of human proteinase-activated receptor-2 (hPAR2): role in cell surface expression and signalling.</title>
        <authorList>
            <person name="Compton S.J."/>
            <person name="Sandhu S."/>
            <person name="Wijesuriya S.J."/>
            <person name="Hollenberg M.D."/>
        </authorList>
    </citation>
    <scope>GLYCOSYLATION AT ASN-30 AND ASN-222</scope>
    <scope>MUTAGENESIS OF ASN-30 AND ASN-222</scope>
</reference>
<reference key="20">
    <citation type="journal article" date="2002" name="Jpn. J. Pharmacol.">
        <title>Effect of protease-activated receptor-2 deficiency on allergic dermatitis in the mouse ear.</title>
        <authorList>
            <person name="Kawagoe J."/>
            <person name="Takizawa T."/>
            <person name="Matsumoto J."/>
            <person name="Tamiya M."/>
            <person name="Meek S.E."/>
            <person name="Smith A.J."/>
            <person name="Hunter G.D."/>
            <person name="Plevin R."/>
            <person name="Saito N."/>
            <person name="Kanke T."/>
            <person name="Fujii M."/>
            <person name="Wada Y."/>
        </authorList>
    </citation>
    <scope>POSSIBLE INVOLVEMENT IN ALLERGIC DERMATITIS</scope>
</reference>
<reference key="21">
    <citation type="journal article" date="2003" name="Am. J. Respir. Cell Mol. Biol.">
        <title>Proteinase-activated receptor-2 and human lung epithelial cells: disarming by neutrophil serine proteinases.</title>
        <authorList>
            <person name="Dulon S."/>
            <person name="Cande C."/>
            <person name="Bunnett N.W."/>
            <person name="Hollenberg M.D."/>
            <person name="Chignard M."/>
            <person name="Pidard D."/>
        </authorList>
    </citation>
    <scope>DEACTIVATION BY NEUTROPHIL ELASTASE AND CATHEPSIN G</scope>
</reference>
<reference key="22">
    <citation type="journal article" date="2003" name="FASEB J.">
        <title>Proinflammatory role of proteinase-activated receptor-2 in humans and mice during cutaneous inflammation in vivo.</title>
        <authorList>
            <person name="Seeliger S."/>
            <person name="Derian C.K."/>
            <person name="Vergnolle N."/>
            <person name="Bunnett N.W."/>
            <person name="Nawroth R."/>
            <person name="Schmelz M."/>
            <person name="Von Der Weid P.Y."/>
            <person name="Buddenkotte J."/>
            <person name="Sunderkotter C."/>
            <person name="Metze D."/>
            <person name="Andrade-Gordon P."/>
            <person name="Harms E."/>
            <person name="Vestweber D."/>
            <person name="Luger T.A."/>
            <person name="Steinhoff M."/>
        </authorList>
    </citation>
    <scope>POSSIBLE INVOLVEMENT IN SKIN DISEASES</scope>
</reference>
<reference key="23">
    <citation type="journal article" date="2003" name="J. Leukoc. Biol.">
        <title>Expression of and functional responses to protease-activated receptors on human eosinophils.</title>
        <authorList>
            <person name="Bolton S.J."/>
            <person name="McNulty C.A."/>
            <person name="Thomas R.J."/>
            <person name="Hewitt C.R."/>
            <person name="Wardlaw A.J."/>
        </authorList>
    </citation>
    <scope>FUNCTION</scope>
</reference>
<reference key="24">
    <citation type="journal article" date="2004" name="Cell. Signal.">
        <title>The role of the C-terminal tail in protease-activated receptor-2-mediated Ca2+ signalling, proline-rich tyrosine kinase-2 activation, and mitogen-activated protein kinase activity.</title>
        <authorList>
            <person name="Seatter M.J."/>
            <person name="Drummond R."/>
            <person name="Kanke T."/>
            <person name="Macfarlane S.R."/>
            <person name="Hollenberg M.D."/>
            <person name="Plevin R."/>
        </authorList>
    </citation>
    <scope>MUTAGENESIS OF 355-ALA--SER-363</scope>
</reference>
<reference key="25">
    <citation type="journal article" date="2004" name="J. Leukoc. Biol.">
        <title>Agonists of proteinase-activated receptor-2 modulate human neutrophil cytokine secretion, expression of cell adhesion molecules, and migration within 3-D collagen lattices.</title>
        <authorList>
            <person name="Shpacovitch V.M."/>
            <person name="Varga G."/>
            <person name="Strey A."/>
            <person name="Gunzer M."/>
            <person name="Mooren F."/>
            <person name="Buddenkotte J."/>
            <person name="Vergnolle N."/>
            <person name="Sommerhoff C.P."/>
            <person name="Grabbe S."/>
            <person name="Gerke V."/>
            <person name="Homey B."/>
            <person name="Hollenberg M."/>
            <person name="Luger T.A."/>
            <person name="Steinhoff M."/>
        </authorList>
    </citation>
    <scope>FUNCTION</scope>
</reference>
<reference key="26">
    <citation type="journal article" date="2005" name="J. Biol. Chem.">
        <title>c-Cbl mediates ubiquitination, degradation, and down-regulation of human protease-activated receptor 2.</title>
        <authorList>
            <person name="Jacob C."/>
            <person name="Cottrell G.S."/>
            <person name="Gehringer D."/>
            <person name="Schmidlin F."/>
            <person name="Grady E.F."/>
            <person name="Bunnett N.W."/>
        </authorList>
    </citation>
    <scope>UBIQUITINATION BY CBL</scope>
</reference>
<reference key="27">
    <citation type="journal article" date="2005" name="J. Thromb. Haemost.">
        <title>Protease-activated receptors-1 and -2 can mediate endothelial barrier protection: role in factor Xa signaling.</title>
        <authorList>
            <person name="Feistritzer C."/>
            <person name="Lenta R."/>
            <person name="Riewald M."/>
        </authorList>
    </citation>
    <scope>FUNCTION IN ENDOTHELIAL BARRIER PROTECTION</scope>
</reference>
<reference key="28">
    <citation type="journal article" date="2005" name="Proc. Natl. Acad. Sci. U.S.A.">
        <title>A major role for proteolytic activity and proteinase-activated receptor-2 in the pathogenesis of infectious colitis.</title>
        <authorList>
            <person name="Hansen K.K."/>
            <person name="Sherman P.M."/>
            <person name="Cellars L."/>
            <person name="Andrade-Gordon P."/>
            <person name="Pan Z."/>
            <person name="Baruch A."/>
            <person name="Wallace J.L."/>
            <person name="Hollenberg M.D."/>
            <person name="Vergnolle N."/>
        </authorList>
    </citation>
    <scope>POSSIBLE INVOLVEMENT IN COLITIS</scope>
</reference>
<reference key="29">
    <citation type="journal article" date="2005" name="J. Pharmacol. Sci.">
        <title>Abrogation of bronchial eosinophilic inflammation and attenuated eotaxin content in protease-activated receptor 2-deficient mice.</title>
        <authorList>
            <person name="Takizawa T."/>
            <person name="Tamiya M."/>
            <person name="Hara T."/>
            <person name="Matsumoto J."/>
            <person name="Saito N."/>
            <person name="Kanke T."/>
            <person name="Kawagoe J."/>
            <person name="Hattori Y."/>
        </authorList>
    </citation>
    <scope>POSSIBLE INVOLVEMENT IN BRONCHIAL EOSINOPHILIC INFLAMMATION</scope>
</reference>
<reference key="30">
    <citation type="journal article" date="2006" name="Am. J. Physiol.">
        <title>PAR2 activation interrupts E-cadherin adhesion and compromises the airway epithelial barrier: protective effect of beta-agonists.</title>
        <authorList>
            <person name="Winter M.C."/>
            <person name="Shasby S.S."/>
            <person name="Ries D.R."/>
            <person name="Shasby D.M."/>
        </authorList>
    </citation>
    <scope>FUNCTION IN EPITHELIAL BARRIER DISRUPTION</scope>
</reference>
<reference key="31">
    <citation type="journal article" date="2006" name="Blood">
        <title>Wegener autoantigen induces maturation of dendritic cells and licenses them for Th1 priming via the protease-activated receptor-2 pathway.</title>
        <authorList>
            <person name="Csernok E."/>
            <person name="Ai M."/>
            <person name="Gross W.L."/>
            <person name="Wicklein D."/>
            <person name="Petersen A."/>
            <person name="Lindner B."/>
            <person name="Lamprecht P."/>
            <person name="Holle J.U."/>
            <person name="Hellmich B."/>
        </authorList>
    </citation>
    <scope>FUNCTION</scope>
    <scope>ACTIVATION BY PRTN3</scope>
</reference>
<reference key="32">
    <citation type="journal article" date="2006" name="J. Exp. Med.">
        <title>Proteinase-activated receptor 2 modulates neuroinflammation in experimental autoimmune encephalomyelitis and multiple sclerosis.</title>
        <authorList>
            <person name="Noorbakhsh F."/>
            <person name="Tsutsui S."/>
            <person name="Vergnolle N."/>
            <person name="Boven L.A."/>
            <person name="Shariat N."/>
            <person name="Vodjgani M."/>
            <person name="Warren K.G."/>
            <person name="Andrade-Gordon P."/>
            <person name="Hollenberg M.D."/>
            <person name="Power C."/>
        </authorList>
    </citation>
    <scope>POSSIBLE INVOLVEMENT IN ENCEPHALOMYELITIS AND MULTIPLE SCLEROSIS</scope>
</reference>
<reference key="33">
    <citation type="journal article" date="2007" name="J. Biol. Chem.">
        <title>Beta-arrestin-dependent regulation of the cofilin pathway downstream of protease-activated receptor-2.</title>
        <authorList>
            <person name="Zoudilova M."/>
            <person name="Kumar P."/>
            <person name="Ge L."/>
            <person name="Wang P."/>
            <person name="Bokoch G.M."/>
            <person name="DeFea K.A."/>
        </authorList>
    </citation>
    <scope>FUNCTION IN ACTIN FILAMENT SEVERING</scope>
</reference>
<reference key="34">
    <citation type="journal article" date="2007" name="J. Biol. Chem.">
        <title>p24A, a type I transmembrane protein, controls ARF1-dependent resensitization of protease-activated receptor-2 by influence on receptor trafficking.</title>
        <authorList>
            <person name="Luo W."/>
            <person name="Wang Y."/>
            <person name="Reiser G."/>
        </authorList>
    </citation>
    <scope>INTERACTION WITH TMED2</scope>
</reference>
<reference key="35">
    <citation type="journal article" date="2007" name="J. Immunol.">
        <title>Mold allergen, pen C 13, induces IL-8 expression in human airway epithelial cells by activating protease-activated receptor 1 and 2.</title>
        <authorList>
            <person name="Chiu L.L."/>
            <person name="Perng D.W."/>
            <person name="Yu C.H."/>
            <person name="Su S.N."/>
            <person name="Chow L.P."/>
        </authorList>
    </citation>
    <scope>FUNCTION</scope>
    <scope>ACTIVATION BY MOLD ALLERGENS</scope>
</reference>
<reference key="36">
    <citation type="journal article" date="2008" name="Am. J. Respir. Cell Mol. Biol.">
        <title>Chitinase activates protease-activated receptor-2 in human airway epithelial cells.</title>
        <authorList>
            <person name="Hong J.H."/>
            <person name="Hong J.Y."/>
            <person name="Park B."/>
            <person name="Lee S.I."/>
            <person name="Seo J.T."/>
            <person name="Kim K.E."/>
            <person name="Sohn M.H."/>
            <person name="Shin D.M."/>
        </authorList>
    </citation>
    <scope>FUNCTION</scope>
    <scope>ACTIVATION BY BACTERIAL CHITINASE</scope>
</reference>
<reference key="37">
    <citation type="journal article" date="2008" name="Cell. Signal.">
        <title>G-protein-dependent and -independent pathways regulate proteinase-activated receptor-2 mediated p65 NFkappaB serine 536 phosphorylation in human keratinocytes.</title>
        <authorList>
            <person name="Goon Goh F."/>
            <person name="Sloss C.M."/>
            <person name="Cunningham M.R."/>
            <person name="Nilsson M."/>
            <person name="Cadalbert L."/>
            <person name="Plevin R."/>
        </authorList>
    </citation>
    <scope>FUNCTION</scope>
</reference>
<reference key="38">
    <citation type="journal article" date="2008" name="J. Biol. Chem.">
        <title>Analysis of proteinase-activated receptor 2 and TLR4 signal transduction: a novel paradigm for receptor cooperativity.</title>
        <authorList>
            <person name="Rallabhandi P."/>
            <person name="Nhu Q.M."/>
            <person name="Toshchakov V.Y."/>
            <person name="Piao W."/>
            <person name="Medvedev A.E."/>
            <person name="Hollenberg M.D."/>
            <person name="Fasano A."/>
            <person name="Vogel S.N."/>
        </authorList>
    </citation>
    <scope>FUNCTION</scope>
    <scope>INTERACTION WITH TLR4</scope>
</reference>
<reference key="39">
    <citation type="journal article" date="2008" name="J. Immunol.">
        <title>Agonists of proteinase-activated receptor-2 enhance IFN-gamma-inducible effects on human monocytes: role in influenza A infection.</title>
        <authorList>
            <person name="Feld M."/>
            <person name="Shpacovitch V.M."/>
            <person name="Ehrhardt C."/>
            <person name="Kerkhoff C."/>
            <person name="Hollenberg M.D."/>
            <person name="Vergnolle N."/>
            <person name="Ludwig S."/>
            <person name="Steinhoff M."/>
        </authorList>
    </citation>
    <scope>FUNCTION IN ANTIVIRAL RESPONSE</scope>
</reference>
<reference key="40">
    <citation type="journal article" date="2008" name="J. Neurosci.">
        <title>Cowhage-evoked itch is mediated by a novel cysteine protease: a ligand of protease-activated receptors.</title>
        <authorList>
            <person name="Reddy V.B."/>
            <person name="Iuga A.O."/>
            <person name="Shimada S.G."/>
            <person name="LaMotte R.H."/>
            <person name="Lerner E.A."/>
        </authorList>
    </citation>
    <scope>ACTIVITY REGULATION</scope>
</reference>
<reference key="41">
    <citation type="journal article" date="2009" name="J. Biol. Chem.">
        <title>Endosomal deubiquitinating enzymes control ubiquitination and down-regulation of protease-activated receptor 2.</title>
        <authorList>
            <person name="Hasdemir B."/>
            <person name="Murphy J.E."/>
            <person name="Cottrell G.S."/>
            <person name="Bunnett N.W."/>
        </authorList>
    </citation>
    <scope>DEUBIQUITINATION</scope>
</reference>
<reference key="42">
    <citation type="journal article" date="2009" name="J. Biol. Chem.">
        <title>Phosphorylation of protease-activated receptor-2 differentially regulates desensitization and internalization.</title>
        <authorList>
            <person name="Ricks T.K."/>
            <person name="Trejo J."/>
        </authorList>
    </citation>
    <scope>PHOSPHORYLATION</scope>
</reference>
<reference key="43">
    <citation type="journal article" date="2009" name="J. Immunol.">
        <title>Protective role for protease-activated receptor-2 against influenza virus pathogenesis via an IFN-gamma-dependent pathway.</title>
        <authorList>
            <person name="Khoufache K."/>
            <person name="LeBouder F."/>
            <person name="Morello E."/>
            <person name="Laurent F."/>
            <person name="Riffault S."/>
            <person name="Andrade-Gordon P."/>
            <person name="Boullier S."/>
            <person name="Rousset P."/>
            <person name="Vergnolle N."/>
            <person name="Riteau B."/>
        </authorList>
    </citation>
    <scope>FUNCTION IN ANTIVIRAL RESPONSE</scope>
</reference>
<reference key="44">
    <citation type="journal article" date="2009" name="J. Immunol.">
        <title>Recognition of fungal protease activities induces cellular activation and eosinophil-derived neurotoxin release in human eosinophils.</title>
        <authorList>
            <person name="Matsuwaki Y."/>
            <person name="Wada K."/>
            <person name="White T.A."/>
            <person name="Benson L.M."/>
            <person name="Charlesworth M.C."/>
            <person name="Checkel J.L."/>
            <person name="Inoue Y."/>
            <person name="Hotta K."/>
            <person name="Ponikau J.U."/>
            <person name="Lawrence C.B."/>
            <person name="Kita H."/>
        </authorList>
    </citation>
    <scope>FUNCTION</scope>
    <scope>ACTIVATION BY TRYPSIN AND FUNGAL ASPARTATE PROTEASE</scope>
</reference>
<reference key="45">
    <citation type="journal article" date="2010" name="Ann. Rheum. Dis.">
        <title>Protease-activated receptor 2: a novel pathogenic pathway in a murine model of osteoarthritis.</title>
        <authorList>
            <person name="Ferrell W.R."/>
            <person name="Kelso E.B."/>
            <person name="Lockhart J.C."/>
            <person name="Plevin R."/>
            <person name="McInnes I.B."/>
        </authorList>
    </citation>
    <scope>POSSIBLE INVOLVEMENT IN ARTHRITIS</scope>
</reference>
<reference key="46">
    <citation type="journal article" date="2010" name="Cell. Signal.">
        <title>Proteinase-activated receptor-2 mediated inhibition of TNFalpha-stimulated JNK activation - a novel paradigm for G(q/11) linked GPCRs.</title>
        <authorList>
            <person name="McIntosh K."/>
            <person name="Cunningham M.R."/>
            <person name="Cadalbert L."/>
            <person name="Lockhart J."/>
            <person name="Boyd G."/>
            <person name="Ferrell W.R."/>
            <person name="Plevin R."/>
        </authorList>
    </citation>
    <scope>FUNCTION IN JNK PATHWAY</scope>
</reference>
<reference key="47">
    <citation type="journal article" date="2010" name="J. Biol. Chem.">
        <title>Factor X/Xa elicits protective signaling responses in endothelial cells directly via PAR-2 and indirectly via endothelial protein C receptor-dependent recruitment of PAR-1.</title>
        <authorList>
            <person name="Bae J.S."/>
            <person name="Yang L."/>
            <person name="Rezaie A.R."/>
        </authorList>
    </citation>
    <scope>FUNCTION IN ENDOTHELIAL BARRIER PROTECTION</scope>
</reference>
<reference key="48">
    <citation type="journal article" date="2010" name="J. Dent. Res.">
        <title>Protease-activated receptor-2 (PAR(2)) in human periodontitis.</title>
        <authorList>
            <person name="Holzhausen M."/>
            <person name="Cortelli J.R."/>
            <person name="da Silva V.A."/>
            <person name="Franco G.C."/>
            <person name="Cortelli S.C."/>
            <person name="Vergnolle N."/>
        </authorList>
    </citation>
    <scope>POSSIBLE INVOLVEMENT IN PERIODONTITIS</scope>
</reference>
<reference key="49">
    <citation type="journal article" date="2010" name="Mucosal Immunol.">
        <title>Novel signaling interactions between proteinase-activated receptor 2 and Toll-like receptors in vitro and in vivo.</title>
        <authorList>
            <person name="Nhu Q.M."/>
            <person name="Shirey K."/>
            <person name="Teijaro J.R."/>
            <person name="Farber D.L."/>
            <person name="Netzel-Arnett S."/>
            <person name="Antalis T.M."/>
            <person name="Fasano A."/>
            <person name="Vogel S.N."/>
        </authorList>
    </citation>
    <scope>FUNCTION</scope>
</reference>
<reference key="50">
    <citation type="journal article" date="2011" name="Immunology">
        <title>Role of proteinase-activated receptor-2 in anti-bacterial and immunomodulatory effects of interferon-gamma on human neutrophils and monocytes.</title>
        <authorList>
            <person name="Shpacovitch V.M."/>
            <person name="Feld M."/>
            <person name="Holzinger D."/>
            <person name="Kido M."/>
            <person name="Hollenberg M.D."/>
            <person name="Levi-Schaffer F."/>
            <person name="Vergnolle N."/>
            <person name="Ludwig S."/>
            <person name="Roth J."/>
            <person name="Luger T."/>
            <person name="Steinhoff M."/>
        </authorList>
    </citation>
    <scope>FUNCTION IN ANTIMICROBIAL RESPONSE</scope>
</reference>
<reference key="51">
    <citation type="journal article" date="2011" name="Biochem. J.">
        <title>Palmitoylation of human proteinase-activated receptor-2 differentially regulates receptor triggered ERK1/2 activation, calcium signalling, and endocytosis.</title>
        <authorList>
            <person name="Botham A."/>
            <person name="Guo X."/>
            <person name="Xiao Y.P."/>
            <person name="Morice A.H."/>
            <person name="Compton S.J."/>
            <person name="Sadofsky L.R."/>
        </authorList>
    </citation>
    <scope>PALMITOYLATION AT CYS-361</scope>
</reference>
<reference key="52">
    <citation type="journal article" date="2012" name="Biochemistry">
        <title>Identification of exosite residues of factor Xa involved in recognition of PAR-2 on endothelial cells.</title>
        <authorList>
            <person name="Manithody C."/>
            <person name="Yang L."/>
            <person name="Rezaie A.R."/>
        </authorList>
    </citation>
    <scope>FUNCTION</scope>
    <scope>PROTEOLYTIC CLEAVAGE BY F10</scope>
</reference>
<reference key="53">
    <citation type="journal article" date="2013" name="Arterioscler. Thromb. Vasc. Biol.">
        <title>Neutrophil proteinase 3 acts on protease-activated receptor-2 to enhance vascular endothelial cell barrier function.</title>
        <authorList>
            <person name="Kuckleburg C.J."/>
            <person name="Newman P.J."/>
        </authorList>
    </citation>
    <scope>FUNCTION</scope>
    <scope>TISSUE SPECIFICITY</scope>
    <scope>PROTEOLYTIC CLEAVAGE</scope>
</reference>
<reference key="54">
    <citation type="journal article" date="2017" name="Nature">
        <title>Structural insight into allosteric modulation of protease-activated receptor 2.</title>
        <authorList>
            <person name="Cheng R.K.Y."/>
            <person name="Fiez-Vandal C."/>
            <person name="Schlenker O."/>
            <person name="Edman K."/>
            <person name="Aggeler B."/>
            <person name="Brown D.G."/>
            <person name="Brown G.A."/>
            <person name="Cooke R.M."/>
            <person name="Dumelin C.E."/>
            <person name="Dore A.S."/>
            <person name="Geschwindner S."/>
            <person name="Grebner C."/>
            <person name="Hermansson N.O."/>
            <person name="Jazayeri A."/>
            <person name="Johansson P."/>
            <person name="Leong L."/>
            <person name="Prihandoko R."/>
            <person name="Rappas M."/>
            <person name="Soutter H."/>
            <person name="Snijder A."/>
            <person name="Sundstrom L."/>
            <person name="Tehan B."/>
            <person name="Thornton P."/>
            <person name="Troast D."/>
            <person name="Wiggin G."/>
            <person name="Zhukov A."/>
            <person name="Marshall F.H."/>
            <person name="Dekker N."/>
        </authorList>
    </citation>
    <scope>X-RAY CRYSTALLOGRAPHY (2.80 ANGSTROMS) OF 59-269 AND 276-377</scope>
    <scope>FUNCTION</scope>
    <scope>DISULFIDE BOND</scope>
    <scope>TOPOLOGY</scope>
    <scope>MUTAGENESIS OF HIS-135; PHE-154; GLY-157; TYR-210; ASN-222; HIS-227; ASP-228 AND ILE-327</scope>
</reference>
<comment type="function">
    <text evidence="2 6 7 10 11 12 13 16 18 19 20 21 22 23 24 25 27 28 29 30 31 33 34 35 36 38 39 40">Receptor for trypsin and trypsin-like enzymes coupled to G proteins (PubMed:28445455). Its function is mediated through the activation of several signaling pathways including phospholipase C (PLC), intracellular calcium, mitogen-activated protein kinase (MAPK), I-kappaB kinase/NF-kappaB and Rho (PubMed:28445455). Can also be transactivated by cleaved F2R/PAR1. Involved in modulation of inflammatory responses and regulation of innate and adaptive immunity, and acts as a sensor for proteolytic enzymes generated during infection. Generally is promoting inflammation. Can signal synergistically with TLR4 and probably TLR2 in inflammatory responses and modulates TLR3 signaling. Has a protective role in establishing the endothelial barrier; the activity involves coagulation factor X. Regulates endothelial cell barrier integrity during neutrophil extravasation, probably following proteolytic cleavage by PRTN3 (PubMed:23202369). Proposed to have a bronchoprotective role in airway epithelium, but also shown to compromise the airway epithelial barrier by interrupting E-cadherin adhesion (PubMed:10086357). Involved in the regulation of vascular tone; activation results in hypotension presumably mediated by vasodilation. Associates with a subset of G proteins alpha subunits such as GNAQ, GNA11, GNA14, GNA12 and GNA13, but probably not with G(o)-alpha, G(i) subunit alpha-1 and G(i) subunit alpha-2. However, according to PubMed:21627585 can signal through G(i) subunit alpha. Believed to be a class B receptor which internalizes as a complex with arrestin and traffic with it to endosomal vesicles, presumably as desensitized receptor, for extended periods of time. Mediates inhibition of TNF-alpha stimulated JNK phosphorylation via coupling to GNAQ and GNA11; the function involves dissociation of RIPK1 and TRADD from TNFR1. Mediates phosphorylation of nuclear factor NF-kappa-B RELA subunit at 'Ser-536'; the function involves IKBKB and is predominantly independent of G proteins. Involved in cellular migration. Involved in cytoskeletal rearrangement and chemotaxis through beta-arrestin-promoted scaffolds; the function is independent of GNAQ and GNA11 and involves promotion of cofilin dephosphorylation and actin filament severing. Induces redistribution of COPS5 from the plasma membrane to the cytosol and activation of the JNK cascade is mediated by COPS5. Involved in the recruitment of leukocytes to the sites of inflammation and is the major PAR receptor capable of modulating eosinophil function such as pro-inflammatory cytokine secretion, superoxide production and degranulation. During inflammation promotes dendritic cell maturation, trafficking to the lymph nodes and subsequent T-cell activation. Involved in antimicrobial response of innate immune cells; activation enhances phagocytosis of Gram-positive and killing of Gram-negative bacteria. Acts synergistically with interferon-gamma in enhancing antiviral responses. Implicated in a number of acute and chronic inflammatory diseases such as of the joints, lungs, brain, gastrointestinal tract, periodontium, skin, and vascular systems, and in autoimmune disorders. Probably mediates activation of pro-inflammatory and pro-fibrotic responses in fibroblasts, triggered by coagulation factor Xa (F10) (By similarity). Mediates activation of barrier protective signaling responses in endothelial cells, triggered by coagulation factor Xa (F10) (PubMed:22409427).</text>
</comment>
<comment type="activity regulation">
    <text evidence="26">Activated upon interaction by mucunain, a cowhage (Mucuna pruriens) plant cysteine proteinase.</text>
</comment>
<comment type="subunit">
    <text evidence="1">Interacts with TLR4, COPS5 and TMED2. Interacts with GNAQ, GNA11, GNA12, GNA13 and GNA14 (By similarity).</text>
</comment>
<comment type="interaction">
    <interactant intactId="EBI-4303189">
        <id>P55085</id>
    </interactant>
    <interactant intactId="EBI-358933">
        <id>P16615</id>
        <label>ATP2A2</label>
    </interactant>
    <organismsDiffer>false</organismsDiffer>
    <experiments>2</experiments>
</comment>
<comment type="interaction">
    <interactant intactId="EBI-4303189">
        <id>P55085</id>
    </interactant>
    <interactant intactId="EBI-518228">
        <id>P22681</id>
        <label>CBL</label>
    </interactant>
    <organismsDiffer>false</organismsDiffer>
    <experiments>3</experiments>
</comment>
<comment type="interaction">
    <interactant intactId="EBI-4303189">
        <id>P55085</id>
    </interactant>
    <interactant intactId="EBI-594661">
        <id>Q92905</id>
        <label>COPS5</label>
    </interactant>
    <organismsDiffer>false</organismsDiffer>
    <experiments>8</experiments>
</comment>
<comment type="interaction">
    <interactant intactId="EBI-4303189">
        <id>P55085</id>
    </interactant>
    <interactant intactId="EBI-4309771">
        <id>Q14868</id>
        <label>EPR-1</label>
    </interactant>
    <organismsDiffer>false</organismsDiffer>
    <experiments>4</experiments>
</comment>
<comment type="interaction">
    <interactant intactId="EBI-4303189">
        <id>P55085</id>
    </interactant>
    <interactant intactId="EBI-1040727">
        <id>P13726</id>
        <label>F3</label>
    </interactant>
    <organismsDiffer>false</organismsDiffer>
    <experiments>2</experiments>
</comment>
<comment type="interaction">
    <interactant intactId="EBI-4303189">
        <id>P55085</id>
    </interactant>
    <interactant intactId="EBI-14100688">
        <id>P0DMV9</id>
        <label>HSPA1B</label>
    </interactant>
    <organismsDiffer>false</organismsDiffer>
    <experiments>2</experiments>
</comment>
<comment type="interaction">
    <interactant intactId="EBI-4303189">
        <id>P55085</id>
    </interactant>
    <interactant intactId="EBI-977302">
        <id>P04156</id>
        <label>PRNP</label>
    </interactant>
    <organismsDiffer>false</organismsDiffer>
    <experiments>3</experiments>
</comment>
<comment type="interaction">
    <interactant intactId="EBI-4303189">
        <id>P55085</id>
    </interactant>
    <interactant intactId="EBI-998485">
        <id>Q15363</id>
        <label>TMED2</label>
    </interactant>
    <organismsDiffer>false</organismsDiffer>
    <experiments>6</experiments>
</comment>
<comment type="interaction">
    <interactant intactId="EBI-4303189">
        <id>P55085</id>
    </interactant>
    <interactant intactId="EBI-4303019">
        <id>P29066</id>
        <label>Arrb1</label>
    </interactant>
    <organismsDiffer>true</organismsDiffer>
    <experiments>6</experiments>
</comment>
<comment type="subcellular location">
    <subcellularLocation>
        <location>Cell membrane</location>
        <topology>Multi-pass membrane protein</topology>
    </subcellularLocation>
</comment>
<comment type="tissue specificity">
    <text evidence="39 41 42">Widely expressed in tissues with especially high levels in pancreas, liver, kidney, small intestine, and colon (PubMed:7556175, PubMed:8615752). Moderate expression is detected in many organs, but none in brain or skeletal muscle (PubMed:7556175, PubMed:8615752). Expressed in endothelial cells (PubMed:23202369).</text>
</comment>
<comment type="PTM">
    <text evidence="8 9 11 12 14 15 21 23 28 33 38 39 43">A proteolytic cleavage generates a new N-terminus that functions as a tethered ligand (PubMed:10805786, PubMed:10831593, PubMed:16478888, PubMed:19864598, PubMed:9020112). Activating serine proteases include trypsin, mast cell tryptase, coagulation factors VII and Xa, myeloblastin/PRTN3 and membrane-type serine protease 1/ST14 (PubMed:10805786, PubMed:10831593, PubMed:16478888, PubMed:19864598, PubMed:23202369, PubMed:9020112). Subsequent cleavage by serine proteases, including neutrophil elastase and cathepsin G, leads to receptor deactivation (PubMed:12594060). At least in part, implicated proteases are also shown to activate the receptor; the glycosylation status of the receptor is thought to contribute to the difference (PubMed:12171601). In addition to conventional trypsin-like proteases activated by other proteases and glycosidases derived from bacteria, fungi and insects (PubMed:11441110, PubMed:11447194, PubMed:17404307, PubMed:18474671, PubMed:19864598). Activated by serine protease allergens such as dust mite Der p3 and Der p9 and mold Pen c13 (PubMed:11441110, PubMed:17404307). Activated by P.gingivalis arginine-specific (trypsin-like) cysteine proteinases called gingipains (PubMed:11447194). Activated by S.griseus exogenous chitinase (PubMed:18474671). Activated by A.alternata aspartate protease; the cleavage generates non-conventional processed forms (PubMed:19864598). Proteolytically cleaved by coagulation factor Xa (F10); cleavage results in activation of F2RL1-dependent signaling (PubMed:22409427).</text>
</comment>
<comment type="PTM">
    <text evidence="14">N-glycosylated and sialylated.</text>
</comment>
<comment type="PTM">
    <text evidence="32">Multiple phosphorylated on serine and threonine residues in the cytoplasmic region upon receptor activation; required for receptor desensitization and recruitment of beta-arrestin.</text>
</comment>
<comment type="PTM">
    <text>Monoubiquitinated by CBL at the plasma membrane and in early endosomes; not required for receptor endocytosis but for translocation to late endosomes or lysosomes. Deubiquitination involves STAMBP and USP8; required for lysosomal trafficking and receptor degradation.</text>
</comment>
<comment type="miscellaneous">
    <text>Synthetic PAR agonist peptides (APs) that mimic the first six amino acids of the newly formed N-terminus activate the native, uncleaved receptor nonenzymatically by binding directly to the corresponding second extracellular loop to mediate signaling.</text>
</comment>
<comment type="similarity">
    <text evidence="4">Belongs to the G-protein coupled receptor 1 family.</text>
</comment>
<comment type="online information" name="Wikipedia">
    <link uri="https://en.wikipedia.org/wiki/Protease-activated_receptor"/>
    <text>Protease-activated receptor entry</text>
</comment>
<name>PAR2_HUMAN</name>
<keyword id="KW-0002">3D-structure</keyword>
<keyword id="KW-1003">Cell membrane</keyword>
<keyword id="KW-1015">Disulfide bond</keyword>
<keyword id="KW-0297">G-protein coupled receptor</keyword>
<keyword id="KW-0325">Glycoprotein</keyword>
<keyword id="KW-0391">Immunity</keyword>
<keyword id="KW-0395">Inflammatory response</keyword>
<keyword id="KW-0399">Innate immunity</keyword>
<keyword id="KW-0449">Lipoprotein</keyword>
<keyword id="KW-0472">Membrane</keyword>
<keyword id="KW-0564">Palmitate</keyword>
<keyword id="KW-0597">Phosphoprotein</keyword>
<keyword id="KW-1267">Proteomics identification</keyword>
<keyword id="KW-0675">Receptor</keyword>
<keyword id="KW-1185">Reference proteome</keyword>
<keyword id="KW-0732">Signal</keyword>
<keyword id="KW-0807">Transducer</keyword>
<keyword id="KW-0812">Transmembrane</keyword>
<keyword id="KW-1133">Transmembrane helix</keyword>
<keyword id="KW-0832">Ubl conjugation</keyword>
<gene>
    <name type="primary">F2RL1</name>
    <name type="synonym">GPR11</name>
    <name type="synonym">PAR2</name>
</gene>
<organism>
    <name type="scientific">Homo sapiens</name>
    <name type="common">Human</name>
    <dbReference type="NCBI Taxonomy" id="9606"/>
    <lineage>
        <taxon>Eukaryota</taxon>
        <taxon>Metazoa</taxon>
        <taxon>Chordata</taxon>
        <taxon>Craniata</taxon>
        <taxon>Vertebrata</taxon>
        <taxon>Euteleostomi</taxon>
        <taxon>Mammalia</taxon>
        <taxon>Eutheria</taxon>
        <taxon>Euarchontoglires</taxon>
        <taxon>Primates</taxon>
        <taxon>Haplorrhini</taxon>
        <taxon>Catarrhini</taxon>
        <taxon>Hominidae</taxon>
        <taxon>Homo</taxon>
    </lineage>
</organism>
<accession>P55085</accession>
<accession>Q13317</accession>
<accession>Q13346</accession>
<accession>Q53XJ8</accession>
<proteinExistence type="evidence at protein level"/>
<feature type="signal peptide" evidence="3">
    <location>
        <begin position="1"/>
        <end position="25"/>
    </location>
</feature>
<feature type="propeptide" id="PRO_0000012750" description="Removed for receptor activation">
    <location>
        <begin position="26"/>
        <end position="36"/>
    </location>
</feature>
<feature type="chain" id="PRO_0000412954" description="Proteinase-activated receptor 2">
    <location>
        <begin position="37"/>
        <end position="397"/>
    </location>
</feature>
<feature type="chain" id="PRO_0000412956" description="Proteinase-activated receptor 2, alternate cleaved 1">
    <location>
        <begin position="38"/>
        <end position="397"/>
    </location>
</feature>
<feature type="chain" id="PRO_0000012751" description="Proteinase-activated receptor 2, alternate cleaved 2">
    <location>
        <begin position="39"/>
        <end position="397"/>
    </location>
</feature>
<feature type="topological domain" description="Extracellular" evidence="40">
    <location>
        <begin position="37"/>
        <end position="71"/>
    </location>
</feature>
<feature type="transmembrane region" description="Helical; Name=1" evidence="40">
    <location>
        <begin position="72"/>
        <end position="101"/>
    </location>
</feature>
<feature type="topological domain" description="Cytoplasmic" evidence="40">
    <location>
        <begin position="102"/>
        <end position="108"/>
    </location>
</feature>
<feature type="transmembrane region" description="Helical; Name=2" evidence="40">
    <location>
        <begin position="109"/>
        <end position="137"/>
    </location>
</feature>
<feature type="topological domain" description="Extracellular" evidence="40">
    <location>
        <begin position="138"/>
        <end position="149"/>
    </location>
</feature>
<feature type="transmembrane region" description="Helical; Name=3" evidence="40">
    <location>
        <begin position="150"/>
        <end position="177"/>
    </location>
</feature>
<feature type="topological domain" description="Cytoplasmic" evidence="40">
    <location>
        <begin position="178"/>
        <end position="183"/>
    </location>
</feature>
<feature type="transmembrane region" description="Helical; Name=4" evidence="40">
    <location>
        <begin position="184"/>
        <end position="211"/>
    </location>
</feature>
<feature type="topological domain" description="Extracellular" evidence="40">
    <location>
        <begin position="212"/>
        <end position="235"/>
    </location>
</feature>
<feature type="transmembrane region" description="Helical; Name=5" evidence="40">
    <location>
        <begin position="236"/>
        <end position="269"/>
    </location>
</feature>
<feature type="topological domain" description="Cytoplasmic" evidence="40">
    <location>
        <begin position="270"/>
        <end position="277"/>
    </location>
</feature>
<feature type="transmembrane region" description="Helical; Name=6" evidence="40">
    <location>
        <begin position="278"/>
        <end position="317"/>
    </location>
</feature>
<feature type="topological domain" description="Extracellular" evidence="40">
    <location>
        <begin position="318"/>
        <end position="323"/>
    </location>
</feature>
<feature type="transmembrane region" description="Helical; Name=7" evidence="40">
    <location>
        <begin position="324"/>
        <end position="347"/>
    </location>
</feature>
<feature type="topological domain" description="Cytoplasmic" evidence="40">
    <location>
        <begin position="348"/>
        <end position="397"/>
    </location>
</feature>
<feature type="region of interest" description="Disordered" evidence="5">
    <location>
        <begin position="373"/>
        <end position="397"/>
    </location>
</feature>
<feature type="compositionally biased region" description="Low complexity" evidence="5">
    <location>
        <begin position="383"/>
        <end position="397"/>
    </location>
</feature>
<feature type="site" description="Cleavage; by trypsin">
    <location>
        <begin position="36"/>
        <end position="37"/>
    </location>
</feature>
<feature type="lipid moiety-binding region" description="S-palmitoyl cysteine" evidence="37">
    <location>
        <position position="361"/>
    </location>
</feature>
<feature type="glycosylation site" description="N-linked (GlcNAc...) asparagine" evidence="14">
    <location>
        <position position="30"/>
    </location>
</feature>
<feature type="glycosylation site" description="N-linked (GlcNAc...) asparagine" evidence="14">
    <location>
        <position position="222"/>
    </location>
</feature>
<feature type="disulfide bond" evidence="4 40 46 47 48">
    <location>
        <begin position="148"/>
        <end position="226"/>
    </location>
</feature>
<feature type="sequence variant" id="VAR_012846" description="In dbSNP:rs2243072." evidence="44">
    <original>S</original>
    <variation>F</variation>
    <location>
        <position position="21"/>
    </location>
</feature>
<feature type="sequence variant" id="VAR_049435" description="In dbSNP:rs616235.">
    <original>N</original>
    <variation>S</variation>
    <location>
        <position position="30"/>
    </location>
</feature>
<feature type="sequence variant" id="VAR_012847" description="In dbSNP:rs2243062." evidence="44">
    <original>R</original>
    <variation>Q</variation>
    <location>
        <position position="270"/>
    </location>
</feature>
<feature type="sequence variant" id="VAR_012848" description="In dbSNP:rs2243083." evidence="44">
    <original>T</original>
    <variation>A</variation>
    <location>
        <position position="291"/>
    </location>
</feature>
<feature type="mutagenesis site" description="Increases sensitivity towards tryptase. Decreases cell surface expression; when associated with A-222." evidence="14">
    <original>N</original>
    <variation>A</variation>
    <location>
        <position position="30"/>
    </location>
</feature>
<feature type="mutagenesis site" description="Slight reduction in ligand-mediated receptor activation." evidence="40">
    <original>H</original>
    <variation>Y</variation>
    <location>
        <position position="135"/>
    </location>
</feature>
<feature type="mutagenesis site" description="Severe reduction in ligand-mediated receptor activation." evidence="40">
    <original>F</original>
    <variation>A</variation>
    <location>
        <position position="154"/>
    </location>
</feature>
<feature type="mutagenesis site" description="Severe reduction in ligand-mediated receptor activation." evidence="40">
    <original>G</original>
    <variation>C</variation>
    <variation>M</variation>
    <location>
        <position position="157"/>
    </location>
</feature>
<feature type="mutagenesis site" description="No defect in ligand-mediated receptor activation." evidence="40">
    <original>Y</original>
    <variation>L</variation>
    <location>
        <position position="210"/>
    </location>
</feature>
<feature type="mutagenesis site" description="Decreases cell surface expression; when associated with A-30. Loss of sensitivity towards all tested proteases." evidence="14">
    <original>N</original>
    <variation>A</variation>
    <location>
        <position position="222"/>
    </location>
</feature>
<feature type="mutagenesis site" description="No defect in ligand-mediated receptor activation." evidence="40">
    <original>N</original>
    <variation>Q</variation>
    <location>
        <position position="222"/>
    </location>
</feature>
<feature type="mutagenesis site" description="No defect in ligand-mediated receptor activation." evidence="40">
    <original>H</original>
    <variation>A</variation>
    <location>
        <position position="227"/>
    </location>
</feature>
<feature type="mutagenesis site" description="Slight reduction in ligand-mediated receptor activation." evidence="40">
    <original>H</original>
    <variation>Q</variation>
    <location>
        <position position="227"/>
    </location>
</feature>
<feature type="mutagenesis site" description="Severe reduction in ligand-mediated receptor activation." evidence="40">
    <original>D</original>
    <variation>A</variation>
    <variation>N</variation>
    <location>
        <position position="228"/>
    </location>
</feature>
<feature type="mutagenesis site" description="Slight reduction in ligand-mediated receptor activation." evidence="40">
    <original>I</original>
    <variation>L</variation>
    <location>
        <position position="327"/>
    </location>
</feature>
<feature type="mutagenesis site" description="Abolishes signaling through accumulation of intracellular calcium and phosphoinositide; no effect in signaling through MAPK." evidence="17">
    <location>
        <begin position="355"/>
        <end position="363"/>
    </location>
</feature>
<feature type="mutagenesis site" description="Loss of palmitoylation; increases surface expression and internalization following trypsin activation, decreases sensitivity and intracellular calcium signaling, increases ERK activation through G(i) subunit alpha.">
    <original>C</original>
    <variation>A</variation>
    <location>
        <position position="361"/>
    </location>
</feature>
<feature type="mutagenesis site" description="Reduces receptor desensitization and internalization, activates ERK1/2; when associated with A-366." evidence="7">
    <original>S</original>
    <variation>A</variation>
    <location>
        <position position="363"/>
    </location>
</feature>
<feature type="mutagenesis site" description="Reduces receptor desensitization and internalization, activates ERK1/2; when associated with A-363." evidence="7">
    <original>T</original>
    <variation>A</variation>
    <location>
        <position position="366"/>
    </location>
</feature>
<feature type="sequence conflict" description="In Ref. 2; AAB47871." evidence="45" ref="2">
    <original>G</original>
    <variation>A</variation>
    <location>
        <position position="138"/>
    </location>
</feature>
<feature type="sequence conflict" description="In Ref. 7; AAH18130." evidence="45" ref="7">
    <original>T</original>
    <variation>S</variation>
    <location>
        <position position="291"/>
    </location>
</feature>
<feature type="helix" evidence="49">
    <location>
        <begin position="63"/>
        <end position="68"/>
    </location>
</feature>
<feature type="helix" evidence="49">
    <location>
        <begin position="72"/>
        <end position="75"/>
    </location>
</feature>
<feature type="helix" evidence="49">
    <location>
        <begin position="77"/>
        <end position="102"/>
    </location>
</feature>
<feature type="helix" evidence="49">
    <location>
        <begin position="109"/>
        <end position="125"/>
    </location>
</feature>
<feature type="helix" evidence="49">
    <location>
        <begin position="128"/>
        <end position="136"/>
    </location>
</feature>
<feature type="helix" evidence="49">
    <location>
        <begin position="145"/>
        <end position="178"/>
    </location>
</feature>
<feature type="helix" evidence="49">
    <location>
        <begin position="186"/>
        <end position="205"/>
    </location>
</feature>
<feature type="helix" evidence="49">
    <location>
        <begin position="207"/>
        <end position="210"/>
    </location>
</feature>
<feature type="strand" evidence="49">
    <location>
        <begin position="215"/>
        <end position="218"/>
    </location>
</feature>
<feature type="turn" evidence="49">
    <location>
        <begin position="219"/>
        <end position="222"/>
    </location>
</feature>
<feature type="strand" evidence="49">
    <location>
        <begin position="223"/>
        <end position="229"/>
    </location>
</feature>
<feature type="helix" evidence="49">
    <location>
        <begin position="233"/>
        <end position="235"/>
    </location>
</feature>
<feature type="helix" evidence="49">
    <location>
        <begin position="236"/>
        <end position="249"/>
    </location>
</feature>
<feature type="helix" evidence="49">
    <location>
        <begin position="252"/>
        <end position="269"/>
    </location>
</feature>
<feature type="helix" evidence="49">
    <location>
        <begin position="279"/>
        <end position="298"/>
    </location>
</feature>
<feature type="helix" evidence="49">
    <location>
        <begin position="301"/>
        <end position="316"/>
    </location>
</feature>
<feature type="helix" evidence="49">
    <location>
        <begin position="323"/>
        <end position="332"/>
    </location>
</feature>
<feature type="helix" evidence="49">
    <location>
        <begin position="333"/>
        <end position="335"/>
    </location>
</feature>
<feature type="helix" evidence="49">
    <location>
        <begin position="336"/>
        <end position="347"/>
    </location>
</feature>
<feature type="helix" evidence="49">
    <location>
        <begin position="349"/>
        <end position="358"/>
    </location>
</feature>
<protein>
    <recommendedName>
        <fullName>Proteinase-activated receptor 2</fullName>
        <shortName>PAR-2</shortName>
    </recommendedName>
    <alternativeName>
        <fullName>Coagulation factor II receptor-like 1</fullName>
    </alternativeName>
    <alternativeName>
        <fullName>G-protein coupled receptor 11</fullName>
    </alternativeName>
    <alternativeName>
        <fullName>Thrombin receptor-like 1</fullName>
    </alternativeName>
    <component>
        <recommendedName>
            <fullName>Proteinase-activated receptor 2, alternate cleaved 1</fullName>
        </recommendedName>
    </component>
    <component>
        <recommendedName>
            <fullName>Proteinase-activated receptor 2, alternate cleaved 2</fullName>
        </recommendedName>
    </component>
</protein>
<dbReference type="EMBL" id="Z49993">
    <property type="protein sequence ID" value="CAA90290.1"/>
    <property type="molecule type" value="Genomic_DNA"/>
</dbReference>
<dbReference type="EMBL" id="Z49994">
    <property type="protein sequence ID" value="CAA90290.1"/>
    <property type="status" value="JOINED"/>
    <property type="molecule type" value="Genomic_DNA"/>
</dbReference>
<dbReference type="EMBL" id="U34038">
    <property type="protein sequence ID" value="AAB47871.1"/>
    <property type="molecule type" value="mRNA"/>
</dbReference>
<dbReference type="EMBL" id="AY336105">
    <property type="protein sequence ID" value="AAP97012.1"/>
    <property type="molecule type" value="mRNA"/>
</dbReference>
<dbReference type="EMBL" id="AF400075">
    <property type="protein sequence ID" value="AAK77914.1"/>
    <property type="molecule type" value="Genomic_DNA"/>
</dbReference>
<dbReference type="EMBL" id="BT009856">
    <property type="protein sequence ID" value="AAP88858.1"/>
    <property type="molecule type" value="mRNA"/>
</dbReference>
<dbReference type="EMBL" id="CH471084">
    <property type="protein sequence ID" value="EAW95782.1"/>
    <property type="molecule type" value="Genomic_DNA"/>
</dbReference>
<dbReference type="EMBL" id="BC012453">
    <property type="protein sequence ID" value="AAH12453.1"/>
    <property type="molecule type" value="mRNA"/>
</dbReference>
<dbReference type="EMBL" id="BC018130">
    <property type="protein sequence ID" value="AAH18130.1"/>
    <property type="molecule type" value="mRNA"/>
</dbReference>
<dbReference type="EMBL" id="U36753">
    <property type="protein sequence ID" value="AAA90957.1"/>
    <property type="molecule type" value="Genomic_DNA"/>
</dbReference>
<dbReference type="CCDS" id="CCDS4033.1"/>
<dbReference type="PIR" id="S66518">
    <property type="entry name" value="S66518"/>
</dbReference>
<dbReference type="RefSeq" id="NP_005233.3">
    <property type="nucleotide sequence ID" value="NM_005242.5"/>
</dbReference>
<dbReference type="PDB" id="5NDD">
    <property type="method" value="X-ray"/>
    <property type="resolution" value="2.80 A"/>
    <property type="chains" value="A=59-269, A=276-377"/>
</dbReference>
<dbReference type="PDB" id="5NDZ">
    <property type="method" value="X-ray"/>
    <property type="resolution" value="3.60 A"/>
    <property type="chains" value="A=59-269, A=276-377"/>
</dbReference>
<dbReference type="PDB" id="5NJ6">
    <property type="method" value="X-ray"/>
    <property type="resolution" value="4.00 A"/>
    <property type="chains" value="A=55-269, A=276-377"/>
</dbReference>
<dbReference type="PDBsum" id="5NDD"/>
<dbReference type="PDBsum" id="5NDZ"/>
<dbReference type="PDBsum" id="5NJ6"/>
<dbReference type="SMR" id="P55085"/>
<dbReference type="BioGRID" id="108449">
    <property type="interactions" value="207"/>
</dbReference>
<dbReference type="CORUM" id="P55085"/>
<dbReference type="DIP" id="DIP-42044N"/>
<dbReference type="FunCoup" id="P55085">
    <property type="interactions" value="996"/>
</dbReference>
<dbReference type="IntAct" id="P55085">
    <property type="interactions" value="172"/>
</dbReference>
<dbReference type="MINT" id="P55085"/>
<dbReference type="STRING" id="9606.ENSP00000296677"/>
<dbReference type="BindingDB" id="P55085"/>
<dbReference type="ChEMBL" id="CHEMBL5963"/>
<dbReference type="GuidetoPHARMACOLOGY" id="348"/>
<dbReference type="TCDB" id="9.A.14.13.12">
    <property type="family name" value="the g-protein-coupled receptor (gpcr) family"/>
</dbReference>
<dbReference type="GlyCosmos" id="P55085">
    <property type="glycosylation" value="2 sites, No reported glycans"/>
</dbReference>
<dbReference type="GlyGen" id="P55085">
    <property type="glycosylation" value="8 sites, 2 O-linked glycans (5 sites)"/>
</dbReference>
<dbReference type="iPTMnet" id="P55085"/>
<dbReference type="PhosphoSitePlus" id="P55085"/>
<dbReference type="SwissPalm" id="P55085"/>
<dbReference type="BioMuta" id="F2RL1"/>
<dbReference type="DMDM" id="1709580"/>
<dbReference type="jPOST" id="P55085"/>
<dbReference type="MassIVE" id="P55085"/>
<dbReference type="PaxDb" id="9606-ENSP00000296677"/>
<dbReference type="PeptideAtlas" id="P55085"/>
<dbReference type="ProteomicsDB" id="56787"/>
<dbReference type="ABCD" id="P55085">
    <property type="antibodies" value="81 sequenced antibodies"/>
</dbReference>
<dbReference type="Antibodypedia" id="4569">
    <property type="antibodies" value="348 antibodies from 37 providers"/>
</dbReference>
<dbReference type="DNASU" id="2150"/>
<dbReference type="Ensembl" id="ENST00000296677.5">
    <property type="protein sequence ID" value="ENSP00000296677.4"/>
    <property type="gene ID" value="ENSG00000164251.5"/>
</dbReference>
<dbReference type="GeneID" id="2150"/>
<dbReference type="KEGG" id="hsa:2150"/>
<dbReference type="MANE-Select" id="ENST00000296677.5">
    <property type="protein sequence ID" value="ENSP00000296677.4"/>
    <property type="RefSeq nucleotide sequence ID" value="NM_005242.6"/>
    <property type="RefSeq protein sequence ID" value="NP_005233.4"/>
</dbReference>
<dbReference type="UCSC" id="uc003keo.4">
    <property type="organism name" value="human"/>
</dbReference>
<dbReference type="AGR" id="HGNC:3538"/>
<dbReference type="CTD" id="2150"/>
<dbReference type="DisGeNET" id="2150"/>
<dbReference type="GeneCards" id="F2RL1"/>
<dbReference type="HGNC" id="HGNC:3538">
    <property type="gene designation" value="F2RL1"/>
</dbReference>
<dbReference type="HPA" id="ENSG00000164251">
    <property type="expression patterns" value="Tissue enhanced (intestine, stomach)"/>
</dbReference>
<dbReference type="MIM" id="600933">
    <property type="type" value="gene"/>
</dbReference>
<dbReference type="neXtProt" id="NX_P55085"/>
<dbReference type="PharmGKB" id="PA27947"/>
<dbReference type="VEuPathDB" id="HostDB:ENSG00000164251"/>
<dbReference type="eggNOG" id="ENOG502QR8S">
    <property type="taxonomic scope" value="Eukaryota"/>
</dbReference>
<dbReference type="HOGENOM" id="CLU_009579_8_2_1"/>
<dbReference type="InParanoid" id="P55085"/>
<dbReference type="OrthoDB" id="9370401at2759"/>
<dbReference type="PAN-GO" id="P55085">
    <property type="GO annotations" value="4 GO annotations based on evolutionary models"/>
</dbReference>
<dbReference type="PhylomeDB" id="P55085"/>
<dbReference type="TreeFam" id="TF330775"/>
<dbReference type="PathwayCommons" id="P55085"/>
<dbReference type="Reactome" id="R-HSA-375276">
    <property type="pathway name" value="Peptide ligand-binding receptors"/>
</dbReference>
<dbReference type="Reactome" id="R-HSA-416476">
    <property type="pathway name" value="G alpha (q) signalling events"/>
</dbReference>
<dbReference type="SignaLink" id="P55085"/>
<dbReference type="SIGNOR" id="P55085"/>
<dbReference type="BioGRID-ORCS" id="2150">
    <property type="hits" value="13 hits in 1164 CRISPR screens"/>
</dbReference>
<dbReference type="ChiTaRS" id="F2RL1">
    <property type="organism name" value="human"/>
</dbReference>
<dbReference type="GeneWiki" id="Protease_activated_receptor_2"/>
<dbReference type="GenomeRNAi" id="2150"/>
<dbReference type="Pharos" id="P55085">
    <property type="development level" value="Tchem"/>
</dbReference>
<dbReference type="PRO" id="PR:P55085"/>
<dbReference type="Proteomes" id="UP000005640">
    <property type="component" value="Chromosome 5"/>
</dbReference>
<dbReference type="RNAct" id="P55085">
    <property type="molecule type" value="protein"/>
</dbReference>
<dbReference type="Bgee" id="ENSG00000164251">
    <property type="expression patterns" value="Expressed in mucosa of sigmoid colon and 153 other cell types or tissues"/>
</dbReference>
<dbReference type="ExpressionAtlas" id="P55085">
    <property type="expression patterns" value="baseline and differential"/>
</dbReference>
<dbReference type="GO" id="GO:0005769">
    <property type="term" value="C:early endosome"/>
    <property type="evidence" value="ECO:0000314"/>
    <property type="project" value="UniProtKB"/>
</dbReference>
<dbReference type="GO" id="GO:0005794">
    <property type="term" value="C:Golgi apparatus"/>
    <property type="evidence" value="ECO:0000304"/>
    <property type="project" value="ProtInc"/>
</dbReference>
<dbReference type="GO" id="GO:0005886">
    <property type="term" value="C:plasma membrane"/>
    <property type="evidence" value="ECO:0000314"/>
    <property type="project" value="UniProtKB"/>
</dbReference>
<dbReference type="GO" id="GO:0031143">
    <property type="term" value="C:pseudopodium"/>
    <property type="evidence" value="ECO:0000250"/>
    <property type="project" value="UniProtKB"/>
</dbReference>
<dbReference type="GO" id="GO:0004930">
    <property type="term" value="F:G protein-coupled receptor activity"/>
    <property type="evidence" value="ECO:0000315"/>
    <property type="project" value="UniProtKB"/>
</dbReference>
<dbReference type="GO" id="GO:0001965">
    <property type="term" value="F:G-protein alpha-subunit binding"/>
    <property type="evidence" value="ECO:0000250"/>
    <property type="project" value="UniProtKB"/>
</dbReference>
<dbReference type="GO" id="GO:0031681">
    <property type="term" value="F:G-protein beta-subunit binding"/>
    <property type="evidence" value="ECO:0000250"/>
    <property type="project" value="UniProtKB"/>
</dbReference>
<dbReference type="GO" id="GO:0002020">
    <property type="term" value="F:protease binding"/>
    <property type="evidence" value="ECO:0000353"/>
    <property type="project" value="UniProtKB"/>
</dbReference>
<dbReference type="GO" id="GO:0038023">
    <property type="term" value="F:signaling receptor activity"/>
    <property type="evidence" value="ECO:0000304"/>
    <property type="project" value="ProtInc"/>
</dbReference>
<dbReference type="GO" id="GO:0005102">
    <property type="term" value="F:signaling receptor binding"/>
    <property type="evidence" value="ECO:0000304"/>
    <property type="project" value="ProtInc"/>
</dbReference>
<dbReference type="GO" id="GO:0015057">
    <property type="term" value="F:thrombin-activated receptor activity"/>
    <property type="evidence" value="ECO:0007669"/>
    <property type="project" value="InterPro"/>
</dbReference>
<dbReference type="GO" id="GO:0007596">
    <property type="term" value="P:blood coagulation"/>
    <property type="evidence" value="ECO:0007669"/>
    <property type="project" value="InterPro"/>
</dbReference>
<dbReference type="GO" id="GO:0045217">
    <property type="term" value="P:cell-cell junction maintenance"/>
    <property type="evidence" value="ECO:0000315"/>
    <property type="project" value="UniProtKB"/>
</dbReference>
<dbReference type="GO" id="GO:0051607">
    <property type="term" value="P:defense response to virus"/>
    <property type="evidence" value="ECO:0000314"/>
    <property type="project" value="UniProtKB"/>
</dbReference>
<dbReference type="GO" id="GO:0061028">
    <property type="term" value="P:establishment of endothelial barrier"/>
    <property type="evidence" value="ECO:0000314"/>
    <property type="project" value="UniProtKB"/>
</dbReference>
<dbReference type="GO" id="GO:0007186">
    <property type="term" value="P:G protein-coupled receptor signaling pathway"/>
    <property type="evidence" value="ECO:0000315"/>
    <property type="project" value="UniProtKB"/>
</dbReference>
<dbReference type="GO" id="GO:0006954">
    <property type="term" value="P:inflammatory response"/>
    <property type="evidence" value="ECO:0007669"/>
    <property type="project" value="UniProtKB-KW"/>
</dbReference>
<dbReference type="GO" id="GO:0045087">
    <property type="term" value="P:innate immune response"/>
    <property type="evidence" value="ECO:0007669"/>
    <property type="project" value="UniProtKB-KW"/>
</dbReference>
<dbReference type="GO" id="GO:0050900">
    <property type="term" value="P:leukocyte migration"/>
    <property type="evidence" value="ECO:0000314"/>
    <property type="project" value="UniProtKB"/>
</dbReference>
<dbReference type="GO" id="GO:0070661">
    <property type="term" value="P:leukocyte proliferation"/>
    <property type="evidence" value="ECO:0000250"/>
    <property type="project" value="UniProtKB"/>
</dbReference>
<dbReference type="GO" id="GO:0097029">
    <property type="term" value="P:mature conventional dendritic cell differentiation"/>
    <property type="evidence" value="ECO:0000314"/>
    <property type="project" value="UniProtKB"/>
</dbReference>
<dbReference type="GO" id="GO:0032682">
    <property type="term" value="P:negative regulation of chemokine production"/>
    <property type="evidence" value="ECO:0000314"/>
    <property type="project" value="UniProtKB"/>
</dbReference>
<dbReference type="GO" id="GO:0046676">
    <property type="term" value="P:negative regulation of insulin secretion"/>
    <property type="evidence" value="ECO:0007669"/>
    <property type="project" value="Ensembl"/>
</dbReference>
<dbReference type="GO" id="GO:0046329">
    <property type="term" value="P:negative regulation of JNK cascade"/>
    <property type="evidence" value="ECO:0000314"/>
    <property type="project" value="UniProtKB"/>
</dbReference>
<dbReference type="GO" id="GO:0034140">
    <property type="term" value="P:negative regulation of toll-like receptor 3 signaling pathway"/>
    <property type="evidence" value="ECO:0000315"/>
    <property type="project" value="UniProtKB"/>
</dbReference>
<dbReference type="GO" id="GO:0010804">
    <property type="term" value="P:negative regulation of tumor necrosis factor-mediated signaling pathway"/>
    <property type="evidence" value="ECO:0000314"/>
    <property type="project" value="UniProtKB"/>
</dbReference>
<dbReference type="GO" id="GO:0042119">
    <property type="term" value="P:neutrophil activation"/>
    <property type="evidence" value="ECO:0000314"/>
    <property type="project" value="UniProtKB"/>
</dbReference>
<dbReference type="GO" id="GO:0030836">
    <property type="term" value="P:positive regulation of actin filament depolymerization"/>
    <property type="evidence" value="ECO:0000314"/>
    <property type="project" value="UniProtKB"/>
</dbReference>
<dbReference type="GO" id="GO:0043123">
    <property type="term" value="P:positive regulation of canonical NF-kappaB signal transduction"/>
    <property type="evidence" value="ECO:0000314"/>
    <property type="project" value="UniProtKB"/>
</dbReference>
<dbReference type="GO" id="GO:0030335">
    <property type="term" value="P:positive regulation of cell migration"/>
    <property type="evidence" value="ECO:0000250"/>
    <property type="project" value="UniProtKB"/>
</dbReference>
<dbReference type="GO" id="GO:0032722">
    <property type="term" value="P:positive regulation of chemokine production"/>
    <property type="evidence" value="ECO:0000314"/>
    <property type="project" value="UniProtKB"/>
</dbReference>
<dbReference type="GO" id="GO:0050921">
    <property type="term" value="P:positive regulation of chemotaxis"/>
    <property type="evidence" value="ECO:0000250"/>
    <property type="project" value="UniProtKB"/>
</dbReference>
<dbReference type="GO" id="GO:0002720">
    <property type="term" value="P:positive regulation of cytokine production involved in immune response"/>
    <property type="evidence" value="ECO:0000314"/>
    <property type="project" value="UniProtKB"/>
</dbReference>
<dbReference type="GO" id="GO:0007204">
    <property type="term" value="P:positive regulation of cytosolic calcium ion concentration"/>
    <property type="evidence" value="ECO:0000314"/>
    <property type="project" value="UniProtKB"/>
</dbReference>
<dbReference type="GO" id="GO:0043311">
    <property type="term" value="P:positive regulation of eosinophil degranulation"/>
    <property type="evidence" value="ECO:0000314"/>
    <property type="project" value="UniProtKB"/>
</dbReference>
<dbReference type="GO" id="GO:0070374">
    <property type="term" value="P:positive regulation of ERK1 and ERK2 cascade"/>
    <property type="evidence" value="ECO:0000314"/>
    <property type="project" value="UniProtKB"/>
</dbReference>
<dbReference type="GO" id="GO:0003104">
    <property type="term" value="P:positive regulation of glomerular filtration"/>
    <property type="evidence" value="ECO:0000250"/>
    <property type="project" value="UniProtKB"/>
</dbReference>
<dbReference type="GO" id="GO:0043547">
    <property type="term" value="P:positive regulation of GTPase activity"/>
    <property type="evidence" value="ECO:0000315"/>
    <property type="project" value="UniProtKB"/>
</dbReference>
<dbReference type="GO" id="GO:0032731">
    <property type="term" value="P:positive regulation of interleukin-1 beta production"/>
    <property type="evidence" value="ECO:0000314"/>
    <property type="project" value="UniProtKB"/>
</dbReference>
<dbReference type="GO" id="GO:0032733">
    <property type="term" value="P:positive regulation of interleukin-10 production"/>
    <property type="evidence" value="ECO:0000314"/>
    <property type="project" value="UniProtKB"/>
</dbReference>
<dbReference type="GO" id="GO:0032755">
    <property type="term" value="P:positive regulation of interleukin-6 production"/>
    <property type="evidence" value="ECO:0000314"/>
    <property type="project" value="UniProtKB"/>
</dbReference>
<dbReference type="GO" id="GO:0032757">
    <property type="term" value="P:positive regulation of interleukin-8 production"/>
    <property type="evidence" value="ECO:0000314"/>
    <property type="project" value="UniProtKB"/>
</dbReference>
<dbReference type="GO" id="GO:0046330">
    <property type="term" value="P:positive regulation of JNK cascade"/>
    <property type="evidence" value="ECO:0000314"/>
    <property type="project" value="UniProtKB"/>
</dbReference>
<dbReference type="GO" id="GO:0002690">
    <property type="term" value="P:positive regulation of leukocyte chemotaxis"/>
    <property type="evidence" value="ECO:0000314"/>
    <property type="project" value="BHF-UCL"/>
</dbReference>
<dbReference type="GO" id="GO:0070963">
    <property type="term" value="P:positive regulation of neutrophil mediated killing of gram-negative bacterium"/>
    <property type="evidence" value="ECO:0000314"/>
    <property type="project" value="UniProtKB"/>
</dbReference>
<dbReference type="GO" id="GO:0060100">
    <property type="term" value="P:positive regulation of phagocytosis, engulfment"/>
    <property type="evidence" value="ECO:0000314"/>
    <property type="project" value="UniProtKB"/>
</dbReference>
<dbReference type="GO" id="GO:0051897">
    <property type="term" value="P:positive regulation of phosphatidylinositol 3-kinase/protein kinase B signal transduction"/>
    <property type="evidence" value="ECO:0000250"/>
    <property type="project" value="UniProtKB"/>
</dbReference>
<dbReference type="GO" id="GO:0050927">
    <property type="term" value="P:positive regulation of positive chemotaxis"/>
    <property type="evidence" value="ECO:0000314"/>
    <property type="project" value="BHF-UCL"/>
</dbReference>
<dbReference type="GO" id="GO:0031274">
    <property type="term" value="P:positive regulation of pseudopodium assembly"/>
    <property type="evidence" value="ECO:0000250"/>
    <property type="project" value="UniProtKB"/>
</dbReference>
<dbReference type="GO" id="GO:1900135">
    <property type="term" value="P:positive regulation of renin secretion into blood stream"/>
    <property type="evidence" value="ECO:0000250"/>
    <property type="project" value="UniProtKB"/>
</dbReference>
<dbReference type="GO" id="GO:0035025">
    <property type="term" value="P:positive regulation of Rho protein signal transduction"/>
    <property type="evidence" value="ECO:0000315"/>
    <property type="project" value="UniProtKB"/>
</dbReference>
<dbReference type="GO" id="GO:0032930">
    <property type="term" value="P:positive regulation of superoxide anion generation"/>
    <property type="evidence" value="ECO:0000314"/>
    <property type="project" value="UniProtKB"/>
</dbReference>
<dbReference type="GO" id="GO:0034137">
    <property type="term" value="P:positive regulation of toll-like receptor 2 signaling pathway"/>
    <property type="evidence" value="ECO:0000315"/>
    <property type="project" value="UniProtKB"/>
</dbReference>
<dbReference type="GO" id="GO:0034141">
    <property type="term" value="P:positive regulation of toll-like receptor 3 signaling pathway"/>
    <property type="evidence" value="ECO:0000315"/>
    <property type="project" value="UniProtKB"/>
</dbReference>
<dbReference type="GO" id="GO:0034145">
    <property type="term" value="P:positive regulation of toll-like receptor 4 signaling pathway"/>
    <property type="evidence" value="ECO:0000314"/>
    <property type="project" value="UniProtKB"/>
</dbReference>
<dbReference type="GO" id="GO:0045944">
    <property type="term" value="P:positive regulation of transcription by RNA polymerase II"/>
    <property type="evidence" value="ECO:0000314"/>
    <property type="project" value="UniProtKB"/>
</dbReference>
<dbReference type="GO" id="GO:0032729">
    <property type="term" value="P:positive regulation of type II interferon production"/>
    <property type="evidence" value="ECO:0000250"/>
    <property type="project" value="UniProtKB"/>
</dbReference>
<dbReference type="GO" id="GO:0030193">
    <property type="term" value="P:regulation of blood coagulation"/>
    <property type="evidence" value="ECO:0000314"/>
    <property type="project" value="BHF-UCL"/>
</dbReference>
<dbReference type="GO" id="GO:0043122">
    <property type="term" value="P:regulation of canonical NF-kappaB signal transduction"/>
    <property type="evidence" value="ECO:0000314"/>
    <property type="project" value="UniProtKB"/>
</dbReference>
<dbReference type="GO" id="GO:2000341">
    <property type="term" value="P:regulation of chemokine (C-X-C motif) ligand 2 production"/>
    <property type="evidence" value="ECO:0000314"/>
    <property type="project" value="UniProtKB"/>
</dbReference>
<dbReference type="GO" id="GO:0046328">
    <property type="term" value="P:regulation of JNK cascade"/>
    <property type="evidence" value="ECO:0000314"/>
    <property type="project" value="UniProtKB"/>
</dbReference>
<dbReference type="GO" id="GO:0002286">
    <property type="term" value="P:T cell activation involved in immune response"/>
    <property type="evidence" value="ECO:0000250"/>
    <property type="project" value="UniProtKB"/>
</dbReference>
<dbReference type="GO" id="GO:0042311">
    <property type="term" value="P:vasodilation"/>
    <property type="evidence" value="ECO:0000250"/>
    <property type="project" value="UniProtKB"/>
</dbReference>
<dbReference type="CDD" id="cd15370">
    <property type="entry name" value="7tmA_PAR2"/>
    <property type="match status" value="1"/>
</dbReference>
<dbReference type="FunFam" id="1.20.1070.10:FF:000040">
    <property type="entry name" value="Coagulation factor 2 (thrombin) receptor"/>
    <property type="match status" value="1"/>
</dbReference>
<dbReference type="Gene3D" id="1.20.1070.10">
    <property type="entry name" value="Rhodopsin 7-helix transmembrane proteins"/>
    <property type="match status" value="1"/>
</dbReference>
<dbReference type="InterPro" id="IPR000276">
    <property type="entry name" value="GPCR_Rhodpsn"/>
</dbReference>
<dbReference type="InterPro" id="IPR017452">
    <property type="entry name" value="GPCR_Rhodpsn_7TM"/>
</dbReference>
<dbReference type="InterPro" id="IPR002281">
    <property type="entry name" value="Pro_rcpt_2"/>
</dbReference>
<dbReference type="InterPro" id="IPR003912">
    <property type="entry name" value="Protea_act_rcpt"/>
</dbReference>
<dbReference type="PANTHER" id="PTHR24232">
    <property type="entry name" value="G-PROTEIN COUPLED RECEPTOR"/>
    <property type="match status" value="1"/>
</dbReference>
<dbReference type="PANTHER" id="PTHR24232:SF21">
    <property type="entry name" value="PROTEINASE-ACTIVATED RECEPTOR 2"/>
    <property type="match status" value="1"/>
</dbReference>
<dbReference type="Pfam" id="PF00001">
    <property type="entry name" value="7tm_1"/>
    <property type="match status" value="1"/>
</dbReference>
<dbReference type="PRINTS" id="PR00237">
    <property type="entry name" value="GPCRRHODOPSN"/>
</dbReference>
<dbReference type="PRINTS" id="PR01428">
    <property type="entry name" value="PROTEASEAR"/>
</dbReference>
<dbReference type="PRINTS" id="PR01152">
    <property type="entry name" value="PROTEASEAR2"/>
</dbReference>
<dbReference type="SUPFAM" id="SSF81321">
    <property type="entry name" value="Family A G protein-coupled receptor-like"/>
    <property type="match status" value="1"/>
</dbReference>
<dbReference type="PROSITE" id="PS50262">
    <property type="entry name" value="G_PROTEIN_RECEP_F1_2"/>
    <property type="match status" value="1"/>
</dbReference>